<keyword id="KW-0030">Aminoacyl-tRNA synthetase</keyword>
<keyword id="KW-0067">ATP-binding</keyword>
<keyword id="KW-0963">Cytoplasm</keyword>
<keyword id="KW-0436">Ligase</keyword>
<keyword id="KW-0479">Metal-binding</keyword>
<keyword id="KW-0547">Nucleotide-binding</keyword>
<keyword id="KW-0648">Protein biosynthesis</keyword>
<keyword id="KW-1185">Reference proteome</keyword>
<keyword id="KW-0694">RNA-binding</keyword>
<keyword id="KW-0820">tRNA-binding</keyword>
<keyword id="KW-0862">Zinc</keyword>
<gene>
    <name evidence="1" type="primary">metG</name>
    <name type="ordered locus">MK0850</name>
</gene>
<comment type="function">
    <text evidence="1">Is required not only for elongation of protein synthesis but also for the initiation of all mRNA translation through initiator tRNA(fMet) aminoacylation.</text>
</comment>
<comment type="catalytic activity">
    <reaction evidence="1">
        <text>tRNA(Met) + L-methionine + ATP = L-methionyl-tRNA(Met) + AMP + diphosphate</text>
        <dbReference type="Rhea" id="RHEA:13481"/>
        <dbReference type="Rhea" id="RHEA-COMP:9667"/>
        <dbReference type="Rhea" id="RHEA-COMP:9698"/>
        <dbReference type="ChEBI" id="CHEBI:30616"/>
        <dbReference type="ChEBI" id="CHEBI:33019"/>
        <dbReference type="ChEBI" id="CHEBI:57844"/>
        <dbReference type="ChEBI" id="CHEBI:78442"/>
        <dbReference type="ChEBI" id="CHEBI:78530"/>
        <dbReference type="ChEBI" id="CHEBI:456215"/>
        <dbReference type="EC" id="6.1.1.10"/>
    </reaction>
</comment>
<comment type="cofactor">
    <cofactor evidence="1">
        <name>Zn(2+)</name>
        <dbReference type="ChEBI" id="CHEBI:29105"/>
    </cofactor>
    <text evidence="1">Binds 1 zinc ion per subunit.</text>
</comment>
<comment type="subunit">
    <text evidence="1">Homodimer.</text>
</comment>
<comment type="subcellular location">
    <subcellularLocation>
        <location evidence="1">Cytoplasm</location>
    </subcellularLocation>
</comment>
<comment type="similarity">
    <text evidence="1">Belongs to the class-I aminoacyl-tRNA synthetase family. MetG type 1 subfamily.</text>
</comment>
<feature type="chain" id="PRO_0000139188" description="Methionine--tRNA ligase">
    <location>
        <begin position="1"/>
        <end position="668"/>
    </location>
</feature>
<feature type="domain" description="tRNA-binding" evidence="1">
    <location>
        <begin position="567"/>
        <end position="668"/>
    </location>
</feature>
<feature type="short sequence motif" description="'HIGH' region">
    <location>
        <begin position="11"/>
        <end position="21"/>
    </location>
</feature>
<feature type="short sequence motif" description="'KMSKS' region">
    <location>
        <begin position="332"/>
        <end position="336"/>
    </location>
</feature>
<feature type="binding site" evidence="1">
    <location>
        <position position="146"/>
    </location>
    <ligand>
        <name>Zn(2+)</name>
        <dbReference type="ChEBI" id="CHEBI:29105"/>
    </ligand>
</feature>
<feature type="binding site" evidence="1">
    <location>
        <position position="149"/>
    </location>
    <ligand>
        <name>Zn(2+)</name>
        <dbReference type="ChEBI" id="CHEBI:29105"/>
    </ligand>
</feature>
<feature type="binding site" evidence="1">
    <location>
        <position position="159"/>
    </location>
    <ligand>
        <name>Zn(2+)</name>
        <dbReference type="ChEBI" id="CHEBI:29105"/>
    </ligand>
</feature>
<feature type="binding site" evidence="1">
    <location>
        <position position="162"/>
    </location>
    <ligand>
        <name>Zn(2+)</name>
        <dbReference type="ChEBI" id="CHEBI:29105"/>
    </ligand>
</feature>
<feature type="binding site" evidence="1">
    <location>
        <position position="335"/>
    </location>
    <ligand>
        <name>ATP</name>
        <dbReference type="ChEBI" id="CHEBI:30616"/>
    </ligand>
</feature>
<sequence length="668" mass="77387">MGKVLVTTALAYTNGPLHIGHVRSTYLPADVYTRFLKMRGIDAIHIGGTDNHGVPIALQAELEGKDPEEIVEKYHEMIKEDLERLNIHFDEFSCTCREFNPDHVDMTQWFFKRLYEAGYIEEREVEQLYCPECERPLPDRYVEGVCPYCGAEGARGDHCEACGRYLEPVQLEEPRCVICGSKPEVRRTMHLFFKLSEFEEDLKKWLESNDNLPKNVRNYAIQWVREGLKDWDIVRDLDWGVPVPLEGYEDKVFYVWFDAPIGYVTFTKQYCDRVGQDWKDYWFSEDTKIVHFIGKDIIVHHALFWPAMLMGVGATLPYTIVAGEYLTLEGEKMSTSRGWVVWVKDFTKLFPADLLRYYLIVVSPLTRDADFSWGDFRDRVNNELVANLGNFVYRTLSFIYRFLDGNVPEAETDQEIVDKIKETHQRVTEHLEKFRFREALTEVLRLSKFGNEYFQEHEPWKLKDEDPERCAEVLRGCARIVKALAVMLAPFLPDSAEKIWQSLGYEDSVHDVDWEEALEDVETKEIPEPEPIFPKVTEEDLEKAKALLPEESGESEGQDDEYVSLEEFNRLDLRVGKIKEAERVEGSDRLIKLRIDIGDRTVTAVAGLYPTYEPEELVGRKVVVLANIQPKEMFGVRSEAMILAVGDEPALLTIDESKREVEPGERIR</sequence>
<dbReference type="EC" id="6.1.1.10" evidence="1"/>
<dbReference type="EMBL" id="AE009439">
    <property type="protein sequence ID" value="AAM02063.1"/>
    <property type="molecule type" value="Genomic_DNA"/>
</dbReference>
<dbReference type="RefSeq" id="WP_011019218.1">
    <property type="nucleotide sequence ID" value="NC_003551.1"/>
</dbReference>
<dbReference type="SMR" id="Q8TX28"/>
<dbReference type="FunCoup" id="Q8TX28">
    <property type="interactions" value="233"/>
</dbReference>
<dbReference type="STRING" id="190192.MK0850"/>
<dbReference type="PaxDb" id="190192-MK0850"/>
<dbReference type="EnsemblBacteria" id="AAM02063">
    <property type="protein sequence ID" value="AAM02063"/>
    <property type="gene ID" value="MK0850"/>
</dbReference>
<dbReference type="GeneID" id="1476951"/>
<dbReference type="KEGG" id="mka:MK0850"/>
<dbReference type="PATRIC" id="fig|190192.8.peg.893"/>
<dbReference type="HOGENOM" id="CLU_009710_1_2_2"/>
<dbReference type="InParanoid" id="Q8TX28"/>
<dbReference type="OrthoDB" id="371856at2157"/>
<dbReference type="Proteomes" id="UP000001826">
    <property type="component" value="Chromosome"/>
</dbReference>
<dbReference type="GO" id="GO:0017101">
    <property type="term" value="C:aminoacyl-tRNA synthetase multienzyme complex"/>
    <property type="evidence" value="ECO:0007669"/>
    <property type="project" value="TreeGrafter"/>
</dbReference>
<dbReference type="GO" id="GO:0005829">
    <property type="term" value="C:cytosol"/>
    <property type="evidence" value="ECO:0007669"/>
    <property type="project" value="TreeGrafter"/>
</dbReference>
<dbReference type="GO" id="GO:0005524">
    <property type="term" value="F:ATP binding"/>
    <property type="evidence" value="ECO:0007669"/>
    <property type="project" value="UniProtKB-UniRule"/>
</dbReference>
<dbReference type="GO" id="GO:0046872">
    <property type="term" value="F:metal ion binding"/>
    <property type="evidence" value="ECO:0007669"/>
    <property type="project" value="UniProtKB-KW"/>
</dbReference>
<dbReference type="GO" id="GO:0004825">
    <property type="term" value="F:methionine-tRNA ligase activity"/>
    <property type="evidence" value="ECO:0007669"/>
    <property type="project" value="UniProtKB-UniRule"/>
</dbReference>
<dbReference type="GO" id="GO:0000049">
    <property type="term" value="F:tRNA binding"/>
    <property type="evidence" value="ECO:0007669"/>
    <property type="project" value="UniProtKB-KW"/>
</dbReference>
<dbReference type="GO" id="GO:0006431">
    <property type="term" value="P:methionyl-tRNA aminoacylation"/>
    <property type="evidence" value="ECO:0007669"/>
    <property type="project" value="UniProtKB-UniRule"/>
</dbReference>
<dbReference type="CDD" id="cd07957">
    <property type="entry name" value="Anticodon_Ia_Met"/>
    <property type="match status" value="1"/>
</dbReference>
<dbReference type="CDD" id="cd00814">
    <property type="entry name" value="MetRS_core"/>
    <property type="match status" value="1"/>
</dbReference>
<dbReference type="CDD" id="cd02800">
    <property type="entry name" value="tRNA_bind_EcMetRS_like"/>
    <property type="match status" value="1"/>
</dbReference>
<dbReference type="FunFam" id="2.20.28.20:FF:000001">
    <property type="entry name" value="Methionine--tRNA ligase"/>
    <property type="match status" value="1"/>
</dbReference>
<dbReference type="Gene3D" id="3.40.50.620">
    <property type="entry name" value="HUPs"/>
    <property type="match status" value="1"/>
</dbReference>
<dbReference type="Gene3D" id="1.10.730.10">
    <property type="entry name" value="Isoleucyl-tRNA Synthetase, Domain 1"/>
    <property type="match status" value="1"/>
</dbReference>
<dbReference type="Gene3D" id="2.20.28.20">
    <property type="entry name" value="Methionyl-tRNA synthetase, Zn-domain"/>
    <property type="match status" value="1"/>
</dbReference>
<dbReference type="Gene3D" id="2.40.50.140">
    <property type="entry name" value="Nucleic acid-binding proteins"/>
    <property type="match status" value="1"/>
</dbReference>
<dbReference type="HAMAP" id="MF_00098">
    <property type="entry name" value="Met_tRNA_synth_type1"/>
    <property type="match status" value="1"/>
</dbReference>
<dbReference type="InterPro" id="IPR041872">
    <property type="entry name" value="Anticodon_Met"/>
</dbReference>
<dbReference type="InterPro" id="IPR004495">
    <property type="entry name" value="Met-tRNA-synth_bsu_C"/>
</dbReference>
<dbReference type="InterPro" id="IPR023458">
    <property type="entry name" value="Met-tRNA_ligase_1"/>
</dbReference>
<dbReference type="InterPro" id="IPR014758">
    <property type="entry name" value="Met-tRNA_synth"/>
</dbReference>
<dbReference type="InterPro" id="IPR015413">
    <property type="entry name" value="Methionyl/Leucyl_tRNA_Synth"/>
</dbReference>
<dbReference type="InterPro" id="IPR033911">
    <property type="entry name" value="MetRS_core"/>
</dbReference>
<dbReference type="InterPro" id="IPR029038">
    <property type="entry name" value="MetRS_Zn"/>
</dbReference>
<dbReference type="InterPro" id="IPR012340">
    <property type="entry name" value="NA-bd_OB-fold"/>
</dbReference>
<dbReference type="InterPro" id="IPR014729">
    <property type="entry name" value="Rossmann-like_a/b/a_fold"/>
</dbReference>
<dbReference type="InterPro" id="IPR002547">
    <property type="entry name" value="tRNA-bd_dom"/>
</dbReference>
<dbReference type="InterPro" id="IPR009080">
    <property type="entry name" value="tRNAsynth_Ia_anticodon-bd"/>
</dbReference>
<dbReference type="NCBIfam" id="TIGR00398">
    <property type="entry name" value="metG"/>
    <property type="match status" value="1"/>
</dbReference>
<dbReference type="NCBIfam" id="TIGR00399">
    <property type="entry name" value="metG_C_term"/>
    <property type="match status" value="1"/>
</dbReference>
<dbReference type="NCBIfam" id="NF001100">
    <property type="entry name" value="PRK00133.1"/>
    <property type="match status" value="1"/>
</dbReference>
<dbReference type="PANTHER" id="PTHR45765">
    <property type="entry name" value="METHIONINE--TRNA LIGASE"/>
    <property type="match status" value="1"/>
</dbReference>
<dbReference type="PANTHER" id="PTHR45765:SF1">
    <property type="entry name" value="METHIONINE--TRNA LIGASE, CYTOPLASMIC"/>
    <property type="match status" value="1"/>
</dbReference>
<dbReference type="Pfam" id="PF19303">
    <property type="entry name" value="Anticodon_3"/>
    <property type="match status" value="1"/>
</dbReference>
<dbReference type="Pfam" id="PF09334">
    <property type="entry name" value="tRNA-synt_1g"/>
    <property type="match status" value="1"/>
</dbReference>
<dbReference type="Pfam" id="PF01588">
    <property type="entry name" value="tRNA_bind"/>
    <property type="match status" value="1"/>
</dbReference>
<dbReference type="PRINTS" id="PR01041">
    <property type="entry name" value="TRNASYNTHMET"/>
</dbReference>
<dbReference type="SUPFAM" id="SSF47323">
    <property type="entry name" value="Anticodon-binding domain of a subclass of class I aminoacyl-tRNA synthetases"/>
    <property type="match status" value="1"/>
</dbReference>
<dbReference type="SUPFAM" id="SSF57770">
    <property type="entry name" value="Methionyl-tRNA synthetase (MetRS), Zn-domain"/>
    <property type="match status" value="1"/>
</dbReference>
<dbReference type="SUPFAM" id="SSF50249">
    <property type="entry name" value="Nucleic acid-binding proteins"/>
    <property type="match status" value="1"/>
</dbReference>
<dbReference type="SUPFAM" id="SSF52374">
    <property type="entry name" value="Nucleotidylyl transferase"/>
    <property type="match status" value="1"/>
</dbReference>
<dbReference type="PROSITE" id="PS50886">
    <property type="entry name" value="TRBD"/>
    <property type="match status" value="1"/>
</dbReference>
<accession>Q8TX28</accession>
<organism>
    <name type="scientific">Methanopyrus kandleri (strain AV19 / DSM 6324 / JCM 9639 / NBRC 100938)</name>
    <dbReference type="NCBI Taxonomy" id="190192"/>
    <lineage>
        <taxon>Archaea</taxon>
        <taxon>Methanobacteriati</taxon>
        <taxon>Methanobacteriota</taxon>
        <taxon>Methanomada group</taxon>
        <taxon>Methanopyri</taxon>
        <taxon>Methanopyrales</taxon>
        <taxon>Methanopyraceae</taxon>
        <taxon>Methanopyrus</taxon>
    </lineage>
</organism>
<proteinExistence type="inferred from homology"/>
<name>SYM_METKA</name>
<protein>
    <recommendedName>
        <fullName evidence="1">Methionine--tRNA ligase</fullName>
        <ecNumber evidence="1">6.1.1.10</ecNumber>
    </recommendedName>
    <alternativeName>
        <fullName evidence="1">Methionyl-tRNA synthetase</fullName>
        <shortName evidence="1">MetRS</shortName>
    </alternativeName>
</protein>
<reference key="1">
    <citation type="journal article" date="2002" name="Proc. Natl. Acad. Sci. U.S.A.">
        <title>The complete genome of hyperthermophile Methanopyrus kandleri AV19 and monophyly of archaeal methanogens.</title>
        <authorList>
            <person name="Slesarev A.I."/>
            <person name="Mezhevaya K.V."/>
            <person name="Makarova K.S."/>
            <person name="Polushin N.N."/>
            <person name="Shcherbinina O.V."/>
            <person name="Shakhova V.V."/>
            <person name="Belova G.I."/>
            <person name="Aravind L."/>
            <person name="Natale D.A."/>
            <person name="Rogozin I.B."/>
            <person name="Tatusov R.L."/>
            <person name="Wolf Y.I."/>
            <person name="Stetter K.O."/>
            <person name="Malykh A.G."/>
            <person name="Koonin E.V."/>
            <person name="Kozyavkin S.A."/>
        </authorList>
    </citation>
    <scope>NUCLEOTIDE SEQUENCE [LARGE SCALE GENOMIC DNA]</scope>
    <source>
        <strain>AV19 / DSM 6324 / JCM 9639 / NBRC 100938</strain>
    </source>
</reference>
<evidence type="ECO:0000255" key="1">
    <source>
        <dbReference type="HAMAP-Rule" id="MF_00098"/>
    </source>
</evidence>